<organism evidence="13">
    <name type="scientific">Klebsiella pneumoniae subsp. pneumoniae (strain HS11286)</name>
    <dbReference type="NCBI Taxonomy" id="1125630"/>
    <lineage>
        <taxon>Bacteria</taxon>
        <taxon>Pseudomonadati</taxon>
        <taxon>Pseudomonadota</taxon>
        <taxon>Gammaproteobacteria</taxon>
        <taxon>Enterobacterales</taxon>
        <taxon>Enterobacteriaceae</taxon>
        <taxon>Klebsiella/Raoultella group</taxon>
        <taxon>Klebsiella</taxon>
        <taxon>Klebsiella pneumoniae complex</taxon>
    </lineage>
</organism>
<protein>
    <recommendedName>
        <fullName evidence="11">Sensor histidine kinase CpxA</fullName>
        <ecNumber evidence="1">2.7.13.3</ecNumber>
    </recommendedName>
</protein>
<reference evidence="13" key="1">
    <citation type="journal article" date="2012" name="J. Bacteriol.">
        <title>Complete genome sequence of Klebsiella pneumoniae subsp. pneumoniae HS11286, a multidrug-resistant strain isolated from human sputum.</title>
        <authorList>
            <person name="Liu P."/>
            <person name="Li P."/>
            <person name="Jiang X."/>
            <person name="Bi D."/>
            <person name="Xie Y."/>
            <person name="Tai C."/>
            <person name="Deng Z."/>
            <person name="Rajakumar K."/>
            <person name="Ou H.Y."/>
        </authorList>
    </citation>
    <scope>NUCLEOTIDE SEQUENCE [LARGE SCALE GENOMIC DNA]</scope>
    <source>
        <strain evidence="13">HS11286</strain>
    </source>
</reference>
<reference evidence="10" key="2">
    <citation type="journal article" date="2012" name="PLoS ONE">
        <title>Role of the two component signal transduction system CpxAR in conferring cefepime and chloramphenicol resistance in Klebsiella pneumoniae NTUH-K2044.</title>
        <authorList>
            <person name="Srinivasan V.B."/>
            <person name="Vaidyanathan V."/>
            <person name="Mondal A."/>
            <person name="Rajamohan G."/>
        </authorList>
    </citation>
    <scope>FUNCTION</scope>
    <scope>INDUCTION</scope>
    <scope>DISRUPTION PHENOTYPE</scope>
    <source>
        <strain evidence="10">NTUH-K2044</strain>
    </source>
</reference>
<reference evidence="10" key="3">
    <citation type="journal article" date="2015" name="Microbiology">
        <title>PecS regulates the urate-responsive expression of type 1 fimbriae in Klebsiella pneumoniae CG43.</title>
        <authorList>
            <person name="Wang Z.C."/>
            <person name="Liu C.J."/>
            <person name="Huang Y.J."/>
            <person name="Wang Y.S."/>
            <person name="Peng H.L."/>
        </authorList>
    </citation>
    <scope>FUNCTION</scope>
    <scope>DISRUPTION PHENOTYPE</scope>
    <source>
        <strain evidence="10">CG43</strain>
    </source>
</reference>
<reference evidence="10" key="4">
    <citation type="journal article" date="2023" name="J. Microbiol. Immunol. Infect.">
        <title>Role of the stress-responsive two-component system CpxAR in regulating fimbriae expression in Klebsiella pneumoniae CG43.</title>
        <authorList>
            <person name="Kuo C.H."/>
            <person name="Lin W.F."/>
            <person name="Liu C.J."/>
            <person name="Wang Z.C."/>
            <person name="Liu T.Y."/>
            <person name="Peng H.L."/>
        </authorList>
    </citation>
    <scope>FUNCTION</scope>
    <scope>DISRUPTION PHENOTYPE</scope>
    <source>
        <strain evidence="10">CG43</strain>
    </source>
</reference>
<accession>A0A0H3GPN8</accession>
<keyword id="KW-0067">ATP-binding</keyword>
<keyword id="KW-0130">Cell adhesion</keyword>
<keyword id="KW-0997">Cell inner membrane</keyword>
<keyword id="KW-1003">Cell membrane</keyword>
<keyword id="KW-0418">Kinase</keyword>
<keyword id="KW-0472">Membrane</keyword>
<keyword id="KW-0547">Nucleotide-binding</keyword>
<keyword id="KW-0597">Phosphoprotein</keyword>
<keyword id="KW-1185">Reference proteome</keyword>
<keyword id="KW-0808">Transferase</keyword>
<keyword id="KW-0812">Transmembrane</keyword>
<keyword id="KW-1133">Transmembrane helix</keyword>
<keyword id="KW-0902">Two-component regulatory system</keyword>
<proteinExistence type="evidence at transcript level"/>
<evidence type="ECO:0000250" key="1">
    <source>
        <dbReference type="UniProtKB" id="P0AE82"/>
    </source>
</evidence>
<evidence type="ECO:0000250" key="2">
    <source>
        <dbReference type="UniProtKB" id="P0AE88"/>
    </source>
</evidence>
<evidence type="ECO:0000255" key="3"/>
<evidence type="ECO:0000255" key="4">
    <source>
        <dbReference type="PROSITE-ProRule" id="PRU00102"/>
    </source>
</evidence>
<evidence type="ECO:0000255" key="5">
    <source>
        <dbReference type="PROSITE-ProRule" id="PRU00107"/>
    </source>
</evidence>
<evidence type="ECO:0000269" key="6">
    <source>
    </source>
</evidence>
<evidence type="ECO:0000269" key="7">
    <source>
    </source>
</evidence>
<evidence type="ECO:0000269" key="8">
    <source>
    </source>
</evidence>
<evidence type="ECO:0000303" key="9">
    <source>
    </source>
</evidence>
<evidence type="ECO:0000305" key="10"/>
<evidence type="ECO:0000305" key="11">
    <source>
    </source>
</evidence>
<evidence type="ECO:0000312" key="12">
    <source>
        <dbReference type="EMBL" id="AEW58769.1"/>
    </source>
</evidence>
<evidence type="ECO:0000312" key="13">
    <source>
        <dbReference type="Proteomes" id="UP000007841"/>
    </source>
</evidence>
<name>CPXA_KLEPH</name>
<gene>
    <name evidence="9" type="primary">cpxA</name>
    <name evidence="12" type="ordered locus">KPHS_00710</name>
</gene>
<feature type="chain" id="PRO_0000459746" description="Sensor histidine kinase CpxA">
    <location>
        <begin position="1"/>
        <end position="453"/>
    </location>
</feature>
<feature type="topological domain" description="Cytoplasmic" evidence="1">
    <location>
        <begin position="1"/>
        <end position="4"/>
    </location>
</feature>
<feature type="transmembrane region" description="Helical" evidence="3">
    <location>
        <begin position="5"/>
        <end position="25"/>
    </location>
</feature>
<feature type="topological domain" description="Periplasmic" evidence="1">
    <location>
        <begin position="26"/>
        <end position="159"/>
    </location>
</feature>
<feature type="transmembrane region" description="Helical" evidence="3">
    <location>
        <begin position="160"/>
        <end position="180"/>
    </location>
</feature>
<feature type="topological domain" description="Cytoplasmic" evidence="1">
    <location>
        <begin position="181"/>
        <end position="453"/>
    </location>
</feature>
<feature type="domain" description="HAMP" evidence="4">
    <location>
        <begin position="180"/>
        <end position="233"/>
    </location>
</feature>
<feature type="domain" description="Histidine kinase" evidence="5">
    <location>
        <begin position="241"/>
        <end position="451"/>
    </location>
</feature>
<feature type="active site" description="Nucleophile" evidence="1">
    <location>
        <position position="244"/>
    </location>
</feature>
<feature type="binding site" evidence="1">
    <location>
        <begin position="244"/>
        <end position="247"/>
    </location>
    <ligand>
        <name>ATP</name>
        <dbReference type="ChEBI" id="CHEBI:30616"/>
    </ligand>
</feature>
<feature type="binding site" evidence="1">
    <location>
        <begin position="355"/>
        <end position="360"/>
    </location>
    <ligand>
        <name>ATP</name>
        <dbReference type="ChEBI" id="CHEBI:30616"/>
    </ligand>
</feature>
<feature type="binding site" evidence="1">
    <location>
        <position position="382"/>
    </location>
    <ligand>
        <name>ATP</name>
        <dbReference type="ChEBI" id="CHEBI:30616"/>
    </ligand>
</feature>
<feature type="binding site" evidence="1">
    <location>
        <begin position="401"/>
        <end position="402"/>
    </location>
    <ligand>
        <name>ATP</name>
        <dbReference type="ChEBI" id="CHEBI:30616"/>
    </ligand>
</feature>
<feature type="binding site" evidence="1">
    <location>
        <begin position="412"/>
        <end position="417"/>
    </location>
    <ligand>
        <name>ATP</name>
        <dbReference type="ChEBI" id="CHEBI:30616"/>
    </ligand>
</feature>
<feature type="modified residue" description="Phosphohistidine; by autocatalysis" evidence="5">
    <location>
        <position position="244"/>
    </location>
</feature>
<sequence>MTARIFAIFWLTLALVLMLVLMLPKLDSRQMTELLESEQRQGIMIEQHVEAELANDPPNDLMWWRRLFRAIDKWAPPGQRLLLVTSEGRVIGAERNEMQIIRNFIGQADNADHPQKKRYGRLEMVGPFSVRDGEDNYQLYLIRPASTSQSDFINLLFDRPLLLLIVTMLVSAPLLLWLAWSLAKPARKLKNAADEVAQGNLRQHPELEAGPQEFLAAGASFNQMVTALERMMTSQQRLLSDISHELRTPLTRLQLGTALLRRRSGESKELERIETEAHRLDSMINDLLVMSRNQAKNALVSETVKANQLWNEVLDNAAFEAEQMGKSFTVEYPPGPWPLYGNPNALESALENIVRNALRYSHTKISVSFSVDKDGITVNVDDDGPGVSPEDREQIFRPFYRTDEARDRESGGTGLGLAIVETAIQQHRGWVKADDSPLGGLRLTIWLPLYKRT</sequence>
<dbReference type="EC" id="2.7.13.3" evidence="1"/>
<dbReference type="EMBL" id="CP003200">
    <property type="protein sequence ID" value="AEW58769.1"/>
    <property type="molecule type" value="Genomic_DNA"/>
</dbReference>
<dbReference type="RefSeq" id="WP_014342855.1">
    <property type="nucleotide sequence ID" value="NC_016845.1"/>
</dbReference>
<dbReference type="RefSeq" id="YP_005224371.1">
    <property type="nucleotide sequence ID" value="NC_016845.1"/>
</dbReference>
<dbReference type="SMR" id="A0A0H3GPN8"/>
<dbReference type="STRING" id="1125630.KPHS_00710"/>
<dbReference type="GeneID" id="11845049"/>
<dbReference type="KEGG" id="kpm:KPHS_00710"/>
<dbReference type="PATRIC" id="fig|1125630.4.peg.71"/>
<dbReference type="HOGENOM" id="CLU_000445_89_27_6"/>
<dbReference type="Proteomes" id="UP000007841">
    <property type="component" value="Chromosome"/>
</dbReference>
<dbReference type="GO" id="GO:0005886">
    <property type="term" value="C:plasma membrane"/>
    <property type="evidence" value="ECO:0007669"/>
    <property type="project" value="UniProtKB-SubCell"/>
</dbReference>
<dbReference type="GO" id="GO:0005524">
    <property type="term" value="F:ATP binding"/>
    <property type="evidence" value="ECO:0007669"/>
    <property type="project" value="UniProtKB-KW"/>
</dbReference>
<dbReference type="GO" id="GO:0000155">
    <property type="term" value="F:phosphorelay sensor kinase activity"/>
    <property type="evidence" value="ECO:0007669"/>
    <property type="project" value="InterPro"/>
</dbReference>
<dbReference type="GO" id="GO:0007155">
    <property type="term" value="P:cell adhesion"/>
    <property type="evidence" value="ECO:0007669"/>
    <property type="project" value="UniProtKB-KW"/>
</dbReference>
<dbReference type="CDD" id="cd06225">
    <property type="entry name" value="HAMP"/>
    <property type="match status" value="1"/>
</dbReference>
<dbReference type="CDD" id="cd16949">
    <property type="entry name" value="HATPase_CpxA-like"/>
    <property type="match status" value="1"/>
</dbReference>
<dbReference type="CDD" id="cd00082">
    <property type="entry name" value="HisKA"/>
    <property type="match status" value="1"/>
</dbReference>
<dbReference type="FunFam" id="1.10.287.130:FF:000007">
    <property type="entry name" value="Sensor histidine kinase CpxA"/>
    <property type="match status" value="1"/>
</dbReference>
<dbReference type="FunFam" id="3.30.450.210:FF:000001">
    <property type="entry name" value="Sensor histidine kinase CpxA"/>
    <property type="match status" value="1"/>
</dbReference>
<dbReference type="FunFam" id="3.30.565.10:FF:000011">
    <property type="entry name" value="Sensor histidine kinase CpxA"/>
    <property type="match status" value="1"/>
</dbReference>
<dbReference type="Gene3D" id="1.10.287.130">
    <property type="match status" value="1"/>
</dbReference>
<dbReference type="Gene3D" id="3.30.565.10">
    <property type="entry name" value="Histidine kinase-like ATPase, C-terminal domain"/>
    <property type="match status" value="1"/>
</dbReference>
<dbReference type="Gene3D" id="3.30.450.210">
    <property type="entry name" value="Two-component sensor protein CpxA, periplasmic domain"/>
    <property type="match status" value="1"/>
</dbReference>
<dbReference type="InterPro" id="IPR050398">
    <property type="entry name" value="Bact_Sensor_His_Kinase"/>
</dbReference>
<dbReference type="InterPro" id="IPR032404">
    <property type="entry name" value="CpxA_peri"/>
</dbReference>
<dbReference type="InterPro" id="IPR038515">
    <property type="entry name" value="CpxA_peri_sf"/>
</dbReference>
<dbReference type="InterPro" id="IPR003660">
    <property type="entry name" value="HAMP_dom"/>
</dbReference>
<dbReference type="InterPro" id="IPR036890">
    <property type="entry name" value="HATPase_C_sf"/>
</dbReference>
<dbReference type="InterPro" id="IPR005467">
    <property type="entry name" value="His_kinase_dom"/>
</dbReference>
<dbReference type="InterPro" id="IPR003661">
    <property type="entry name" value="HisK_dim/P_dom"/>
</dbReference>
<dbReference type="InterPro" id="IPR036097">
    <property type="entry name" value="HisK_dim/P_sf"/>
</dbReference>
<dbReference type="InterPro" id="IPR004358">
    <property type="entry name" value="Sig_transdc_His_kin-like_C"/>
</dbReference>
<dbReference type="NCBIfam" id="NF007007">
    <property type="entry name" value="PRK09470.1"/>
    <property type="match status" value="1"/>
</dbReference>
<dbReference type="PANTHER" id="PTHR45528">
    <property type="entry name" value="SENSOR HISTIDINE KINASE CPXA"/>
    <property type="match status" value="1"/>
</dbReference>
<dbReference type="PANTHER" id="PTHR45528:SF1">
    <property type="entry name" value="SENSOR HISTIDINE KINASE CPXA"/>
    <property type="match status" value="1"/>
</dbReference>
<dbReference type="Pfam" id="PF16527">
    <property type="entry name" value="CpxA_peri"/>
    <property type="match status" value="1"/>
</dbReference>
<dbReference type="Pfam" id="PF00672">
    <property type="entry name" value="HAMP"/>
    <property type="match status" value="1"/>
</dbReference>
<dbReference type="Pfam" id="PF02518">
    <property type="entry name" value="HATPase_c"/>
    <property type="match status" value="1"/>
</dbReference>
<dbReference type="Pfam" id="PF00512">
    <property type="entry name" value="HisKA"/>
    <property type="match status" value="1"/>
</dbReference>
<dbReference type="PRINTS" id="PR00344">
    <property type="entry name" value="BCTRLSENSOR"/>
</dbReference>
<dbReference type="SMART" id="SM00304">
    <property type="entry name" value="HAMP"/>
    <property type="match status" value="1"/>
</dbReference>
<dbReference type="SMART" id="SM00387">
    <property type="entry name" value="HATPase_c"/>
    <property type="match status" value="1"/>
</dbReference>
<dbReference type="SMART" id="SM00388">
    <property type="entry name" value="HisKA"/>
    <property type="match status" value="1"/>
</dbReference>
<dbReference type="SUPFAM" id="SSF55874">
    <property type="entry name" value="ATPase domain of HSP90 chaperone/DNA topoisomerase II/histidine kinase"/>
    <property type="match status" value="1"/>
</dbReference>
<dbReference type="SUPFAM" id="SSF47384">
    <property type="entry name" value="Homodimeric domain of signal transducing histidine kinase"/>
    <property type="match status" value="1"/>
</dbReference>
<dbReference type="PROSITE" id="PS50885">
    <property type="entry name" value="HAMP"/>
    <property type="match status" value="1"/>
</dbReference>
<dbReference type="PROSITE" id="PS50109">
    <property type="entry name" value="HIS_KIN"/>
    <property type="match status" value="1"/>
</dbReference>
<comment type="function">
    <text evidence="1 6 8">Histidine kinase member of the two-component regulatory system CpxA/CpxR which responds to envelope stress response by activating or, in some cases, repressing expression of downstream genes (PubMed:22496764, PubMed:36898943). Activates CpxR by phosphorylation (By similarity).</text>
</comment>
<comment type="catalytic activity">
    <reaction evidence="1">
        <text>ATP + protein L-histidine = ADP + protein N-phospho-L-histidine.</text>
        <dbReference type="EC" id="2.7.13.3"/>
    </reaction>
</comment>
<comment type="activity regulation">
    <text evidence="1">The two-component system is activated by envelope stress such as overexpression of some (misfolded) periplasmic proteins.</text>
</comment>
<comment type="subunit">
    <text evidence="2">Interacts with cognate response regulator CpxR.</text>
</comment>
<comment type="subcellular location">
    <subcellularLocation>
        <location evidence="1">Cell inner membrane</location>
        <topology evidence="1">Multi-pass membrane protein</topology>
    </subcellularLocation>
</comment>
<comment type="induction">
    <text evidence="6">Part of the putative cpxR-cpxA operon.</text>
</comment>
<comment type="disruption phenotype">
    <text evidence="6 7 8">Deletion in the CG43 strain significantly increases FimA production but slightly decreases MrkA production (PubMed:36898943). A double cpxR-cpxA mutant in the CG43 strain activates expression of pecS and pecM (PubMed:26385366). Increases production of the major pilin of type 3 fimbriae MrkA as well as that of type 1 fimbriae FimA (PubMed:26385366, PubMed:36898943). Increases mannose-sensitive yeast agglutination activity and reduces biofilm formation in the CG43 strain (PubMed:26385366, PubMed:36898943). Increases promoter activities of fimA, fimB and mrkA, decreases ryhB and cpxP, but has no effect on fur (PubMed:36898943). A double cpxR-cpxA mutant in the NTUH-K2044 strain causes growth of smaller colonies, but no significant difference in cell size, compared to wild type (PubMed:22496764). Reduces growth in response to oxidative stress, osmotic or bile stressors (PubMed:22496764). Significantly reduces expression of the resistance-nodulation-cell division (RND) efflux pump genes, including acrB, acrD and eefB (PubMed:22496764). Significantly increases sensitivity to beta-lactam antibiotics, by comparison with wild type (PubMed:22496764). Halves survival rate upon exposure to the disinfectant, chlorhexidine (PubMed:22496764).</text>
</comment>